<sequence>MTAAFYDLMDFDEVLEKYDPVMGLEVHVELATETKMFSASSAHFGAAPNSNVDPVSLGLPGALPVVNAKGVEWAIKIGLALNCSIAESSRFARKNYFYPDQPKNYQISQYDEPIAYDGYLDVMLEDGTEWRIEIERAHMEEDTGKLTHLGGTSGRIHGATASLVDCNRAGVPLIEIVTKPIEGAGARAPEIAKAYVSALRDLVKALGVSDGRLDQGSMRVDANLSLRPIGQEEFGTRTETKNINSLKSVEQAITFEMQRQAHVLDNGGTIDQETRHYQETDGTTSKGRPKETAEDYRYFNDPDLPPVIAPAEWVEEIRATLPELPWVRRARIQEEWKLSDAEMRDLVNANALDLIIETVEAGTTPDEARAWWVSYLSQKANETGVELEALPVTPAHVARVVALIKEGKLTNKLGRQAIDGVLAGEGDVDAVVASRGLEVVRDDGAIEAAVDEALAANPDIVEKYRAGNTKVTGAIVGAVMKATRGKADPAQVNKLIAEKLA</sequence>
<reference key="1">
    <citation type="journal article" date="2003" name="Genome Res.">
        <title>Comparative complete genome sequence analysis of the amino acid replacements responsible for the thermostability of Corynebacterium efficiens.</title>
        <authorList>
            <person name="Nishio Y."/>
            <person name="Nakamura Y."/>
            <person name="Kawarabayasi Y."/>
            <person name="Usuda Y."/>
            <person name="Kimura E."/>
            <person name="Sugimoto S."/>
            <person name="Matsui K."/>
            <person name="Yamagishi A."/>
            <person name="Kikuchi H."/>
            <person name="Ikeo K."/>
            <person name="Gojobori T."/>
        </authorList>
    </citation>
    <scope>NUCLEOTIDE SEQUENCE [LARGE SCALE GENOMIC DNA]</scope>
    <source>
        <strain>DSM 44549 / YS-314 / AJ 12310 / JCM 11189 / NBRC 100395</strain>
    </source>
</reference>
<feature type="chain" id="PRO_0000148785" description="Aspartyl/glutamyl-tRNA(Asn/Gln) amidotransferase subunit B">
    <location>
        <begin position="1"/>
        <end position="501"/>
    </location>
</feature>
<feature type="region of interest" description="Disordered" evidence="2">
    <location>
        <begin position="272"/>
        <end position="291"/>
    </location>
</feature>
<dbReference type="EC" id="6.3.5.-" evidence="1"/>
<dbReference type="EMBL" id="BA000035">
    <property type="protein sequence ID" value="BAC18161.1"/>
    <property type="molecule type" value="Genomic_DNA"/>
</dbReference>
<dbReference type="RefSeq" id="WP_006769315.1">
    <property type="nucleotide sequence ID" value="NC_004369.1"/>
</dbReference>
<dbReference type="SMR" id="Q8FPY5"/>
<dbReference type="STRING" id="196164.gene:10741760"/>
<dbReference type="KEGG" id="cef:CE1351"/>
<dbReference type="eggNOG" id="COG0064">
    <property type="taxonomic scope" value="Bacteria"/>
</dbReference>
<dbReference type="HOGENOM" id="CLU_019240_0_0_11"/>
<dbReference type="OrthoDB" id="9804078at2"/>
<dbReference type="Proteomes" id="UP000001409">
    <property type="component" value="Chromosome"/>
</dbReference>
<dbReference type="GO" id="GO:0050566">
    <property type="term" value="F:asparaginyl-tRNA synthase (glutamine-hydrolyzing) activity"/>
    <property type="evidence" value="ECO:0007669"/>
    <property type="project" value="RHEA"/>
</dbReference>
<dbReference type="GO" id="GO:0005524">
    <property type="term" value="F:ATP binding"/>
    <property type="evidence" value="ECO:0007669"/>
    <property type="project" value="UniProtKB-KW"/>
</dbReference>
<dbReference type="GO" id="GO:0050567">
    <property type="term" value="F:glutaminyl-tRNA synthase (glutamine-hydrolyzing) activity"/>
    <property type="evidence" value="ECO:0007669"/>
    <property type="project" value="UniProtKB-UniRule"/>
</dbReference>
<dbReference type="GO" id="GO:0070681">
    <property type="term" value="P:glutaminyl-tRNAGln biosynthesis via transamidation"/>
    <property type="evidence" value="ECO:0007669"/>
    <property type="project" value="TreeGrafter"/>
</dbReference>
<dbReference type="GO" id="GO:0006412">
    <property type="term" value="P:translation"/>
    <property type="evidence" value="ECO:0007669"/>
    <property type="project" value="UniProtKB-UniRule"/>
</dbReference>
<dbReference type="FunFam" id="1.10.10.410:FF:000001">
    <property type="entry name" value="Aspartyl/glutamyl-tRNA(Asn/Gln) amidotransferase subunit B"/>
    <property type="match status" value="1"/>
</dbReference>
<dbReference type="Gene3D" id="1.10.10.410">
    <property type="match status" value="1"/>
</dbReference>
<dbReference type="HAMAP" id="MF_00121">
    <property type="entry name" value="GatB"/>
    <property type="match status" value="1"/>
</dbReference>
<dbReference type="InterPro" id="IPR017959">
    <property type="entry name" value="Asn/Gln-tRNA_amidoTrfase_suB/E"/>
</dbReference>
<dbReference type="InterPro" id="IPR006075">
    <property type="entry name" value="Asn/Gln-tRNA_Trfase_suB/E_cat"/>
</dbReference>
<dbReference type="InterPro" id="IPR018027">
    <property type="entry name" value="Asn/Gln_amidotransferase"/>
</dbReference>
<dbReference type="InterPro" id="IPR003789">
    <property type="entry name" value="Asn/Gln_tRNA_amidoTrase-B-like"/>
</dbReference>
<dbReference type="InterPro" id="IPR004413">
    <property type="entry name" value="GatB"/>
</dbReference>
<dbReference type="InterPro" id="IPR023168">
    <property type="entry name" value="GatB_Yqey_C_2"/>
</dbReference>
<dbReference type="InterPro" id="IPR017958">
    <property type="entry name" value="Gln-tRNA_amidoTrfase_suB_CS"/>
</dbReference>
<dbReference type="InterPro" id="IPR014746">
    <property type="entry name" value="Gln_synth/guanido_kin_cat_dom"/>
</dbReference>
<dbReference type="NCBIfam" id="TIGR00133">
    <property type="entry name" value="gatB"/>
    <property type="match status" value="1"/>
</dbReference>
<dbReference type="NCBIfam" id="NF004012">
    <property type="entry name" value="PRK05477.1-2"/>
    <property type="match status" value="1"/>
</dbReference>
<dbReference type="NCBIfam" id="NF004013">
    <property type="entry name" value="PRK05477.1-3"/>
    <property type="match status" value="1"/>
</dbReference>
<dbReference type="NCBIfam" id="NF004014">
    <property type="entry name" value="PRK05477.1-4"/>
    <property type="match status" value="1"/>
</dbReference>
<dbReference type="PANTHER" id="PTHR11659">
    <property type="entry name" value="GLUTAMYL-TRNA GLN AMIDOTRANSFERASE SUBUNIT B MITOCHONDRIAL AND PROKARYOTIC PET112-RELATED"/>
    <property type="match status" value="1"/>
</dbReference>
<dbReference type="PANTHER" id="PTHR11659:SF0">
    <property type="entry name" value="GLUTAMYL-TRNA(GLN) AMIDOTRANSFERASE SUBUNIT B, MITOCHONDRIAL"/>
    <property type="match status" value="1"/>
</dbReference>
<dbReference type="Pfam" id="PF02934">
    <property type="entry name" value="GatB_N"/>
    <property type="match status" value="1"/>
</dbReference>
<dbReference type="Pfam" id="PF02637">
    <property type="entry name" value="GatB_Yqey"/>
    <property type="match status" value="1"/>
</dbReference>
<dbReference type="SMART" id="SM00845">
    <property type="entry name" value="GatB_Yqey"/>
    <property type="match status" value="1"/>
</dbReference>
<dbReference type="SUPFAM" id="SSF89095">
    <property type="entry name" value="GatB/YqeY motif"/>
    <property type="match status" value="1"/>
</dbReference>
<dbReference type="SUPFAM" id="SSF55931">
    <property type="entry name" value="Glutamine synthetase/guanido kinase"/>
    <property type="match status" value="1"/>
</dbReference>
<dbReference type="PROSITE" id="PS01234">
    <property type="entry name" value="GATB"/>
    <property type="match status" value="1"/>
</dbReference>
<organism>
    <name type="scientific">Corynebacterium efficiens (strain DSM 44549 / YS-314 / AJ 12310 / JCM 11189 / NBRC 100395)</name>
    <dbReference type="NCBI Taxonomy" id="196164"/>
    <lineage>
        <taxon>Bacteria</taxon>
        <taxon>Bacillati</taxon>
        <taxon>Actinomycetota</taxon>
        <taxon>Actinomycetes</taxon>
        <taxon>Mycobacteriales</taxon>
        <taxon>Corynebacteriaceae</taxon>
        <taxon>Corynebacterium</taxon>
    </lineage>
</organism>
<protein>
    <recommendedName>
        <fullName evidence="1">Aspartyl/glutamyl-tRNA(Asn/Gln) amidotransferase subunit B</fullName>
        <shortName evidence="1">Asp/Glu-ADT subunit B</shortName>
        <ecNumber evidence="1">6.3.5.-</ecNumber>
    </recommendedName>
</protein>
<proteinExistence type="inferred from homology"/>
<gene>
    <name evidence="1" type="primary">gatB</name>
    <name type="ordered locus">CE1351</name>
</gene>
<comment type="function">
    <text evidence="1">Allows the formation of correctly charged Asn-tRNA(Asn) or Gln-tRNA(Gln) through the transamidation of misacylated Asp-tRNA(Asn) or Glu-tRNA(Gln) in organisms which lack either or both of asparaginyl-tRNA or glutaminyl-tRNA synthetases. The reaction takes place in the presence of glutamine and ATP through an activated phospho-Asp-tRNA(Asn) or phospho-Glu-tRNA(Gln).</text>
</comment>
<comment type="catalytic activity">
    <reaction evidence="1">
        <text>L-glutamyl-tRNA(Gln) + L-glutamine + ATP + H2O = L-glutaminyl-tRNA(Gln) + L-glutamate + ADP + phosphate + H(+)</text>
        <dbReference type="Rhea" id="RHEA:17521"/>
        <dbReference type="Rhea" id="RHEA-COMP:9681"/>
        <dbReference type="Rhea" id="RHEA-COMP:9684"/>
        <dbReference type="ChEBI" id="CHEBI:15377"/>
        <dbReference type="ChEBI" id="CHEBI:15378"/>
        <dbReference type="ChEBI" id="CHEBI:29985"/>
        <dbReference type="ChEBI" id="CHEBI:30616"/>
        <dbReference type="ChEBI" id="CHEBI:43474"/>
        <dbReference type="ChEBI" id="CHEBI:58359"/>
        <dbReference type="ChEBI" id="CHEBI:78520"/>
        <dbReference type="ChEBI" id="CHEBI:78521"/>
        <dbReference type="ChEBI" id="CHEBI:456216"/>
    </reaction>
</comment>
<comment type="catalytic activity">
    <reaction evidence="1">
        <text>L-aspartyl-tRNA(Asn) + L-glutamine + ATP + H2O = L-asparaginyl-tRNA(Asn) + L-glutamate + ADP + phosphate + 2 H(+)</text>
        <dbReference type="Rhea" id="RHEA:14513"/>
        <dbReference type="Rhea" id="RHEA-COMP:9674"/>
        <dbReference type="Rhea" id="RHEA-COMP:9677"/>
        <dbReference type="ChEBI" id="CHEBI:15377"/>
        <dbReference type="ChEBI" id="CHEBI:15378"/>
        <dbReference type="ChEBI" id="CHEBI:29985"/>
        <dbReference type="ChEBI" id="CHEBI:30616"/>
        <dbReference type="ChEBI" id="CHEBI:43474"/>
        <dbReference type="ChEBI" id="CHEBI:58359"/>
        <dbReference type="ChEBI" id="CHEBI:78515"/>
        <dbReference type="ChEBI" id="CHEBI:78516"/>
        <dbReference type="ChEBI" id="CHEBI:456216"/>
    </reaction>
</comment>
<comment type="subunit">
    <text evidence="1">Heterotrimer of A, B and C subunits.</text>
</comment>
<comment type="similarity">
    <text evidence="1">Belongs to the GatB/GatE family. GatB subfamily.</text>
</comment>
<name>GATB_COREF</name>
<evidence type="ECO:0000255" key="1">
    <source>
        <dbReference type="HAMAP-Rule" id="MF_00121"/>
    </source>
</evidence>
<evidence type="ECO:0000256" key="2">
    <source>
        <dbReference type="SAM" id="MobiDB-lite"/>
    </source>
</evidence>
<accession>Q8FPY5</accession>
<keyword id="KW-0067">ATP-binding</keyword>
<keyword id="KW-0436">Ligase</keyword>
<keyword id="KW-0547">Nucleotide-binding</keyword>
<keyword id="KW-0648">Protein biosynthesis</keyword>
<keyword id="KW-1185">Reference proteome</keyword>